<organism>
    <name type="scientific">Chlorobium luteolum (strain DSM 273 / BCRC 81028 / 2530)</name>
    <name type="common">Pelodictyon luteolum</name>
    <dbReference type="NCBI Taxonomy" id="319225"/>
    <lineage>
        <taxon>Bacteria</taxon>
        <taxon>Pseudomonadati</taxon>
        <taxon>Chlorobiota</taxon>
        <taxon>Chlorobiia</taxon>
        <taxon>Chlorobiales</taxon>
        <taxon>Chlorobiaceae</taxon>
        <taxon>Chlorobium/Pelodictyon group</taxon>
        <taxon>Pelodictyon</taxon>
    </lineage>
</organism>
<reference key="1">
    <citation type="submission" date="2005-08" db="EMBL/GenBank/DDBJ databases">
        <title>Complete sequence of Pelodictyon luteolum DSM 273.</title>
        <authorList>
            <consortium name="US DOE Joint Genome Institute"/>
            <person name="Copeland A."/>
            <person name="Lucas S."/>
            <person name="Lapidus A."/>
            <person name="Barry K."/>
            <person name="Detter J.C."/>
            <person name="Glavina T."/>
            <person name="Hammon N."/>
            <person name="Israni S."/>
            <person name="Pitluck S."/>
            <person name="Bryant D."/>
            <person name="Schmutz J."/>
            <person name="Larimer F."/>
            <person name="Land M."/>
            <person name="Kyrpides N."/>
            <person name="Ivanova N."/>
            <person name="Richardson P."/>
        </authorList>
    </citation>
    <scope>NUCLEOTIDE SEQUENCE [LARGE SCALE GENOMIC DNA]</scope>
    <source>
        <strain>DSM 273 / BCRC 81028 / 2530</strain>
    </source>
</reference>
<keyword id="KW-1185">Reference proteome</keyword>
<keyword id="KW-0678">Repressor</keyword>
<keyword id="KW-0687">Ribonucleoprotein</keyword>
<keyword id="KW-0689">Ribosomal protein</keyword>
<keyword id="KW-0694">RNA-binding</keyword>
<keyword id="KW-0699">rRNA-binding</keyword>
<keyword id="KW-0810">Translation regulation</keyword>
<keyword id="KW-0820">tRNA-binding</keyword>
<comment type="function">
    <text evidence="1">Binds directly to 23S rRNA. The L1 stalk is quite mobile in the ribosome, and is involved in E site tRNA release.</text>
</comment>
<comment type="function">
    <text evidence="1">Protein L1 is also a translational repressor protein, it controls the translation of the L11 operon by binding to its mRNA.</text>
</comment>
<comment type="subunit">
    <text evidence="1">Part of the 50S ribosomal subunit.</text>
</comment>
<comment type="similarity">
    <text evidence="1">Belongs to the universal ribosomal protein uL1 family.</text>
</comment>
<accession>Q3B1H4</accession>
<dbReference type="EMBL" id="CP000096">
    <property type="protein sequence ID" value="ABB24807.1"/>
    <property type="molecule type" value="Genomic_DNA"/>
</dbReference>
<dbReference type="RefSeq" id="WP_011358677.1">
    <property type="nucleotide sequence ID" value="NC_007512.1"/>
</dbReference>
<dbReference type="SMR" id="Q3B1H4"/>
<dbReference type="STRING" id="319225.Plut_1965"/>
<dbReference type="KEGG" id="plt:Plut_1965"/>
<dbReference type="eggNOG" id="COG0081">
    <property type="taxonomic scope" value="Bacteria"/>
</dbReference>
<dbReference type="HOGENOM" id="CLU_062853_0_0_10"/>
<dbReference type="OrthoDB" id="9803740at2"/>
<dbReference type="Proteomes" id="UP000002709">
    <property type="component" value="Chromosome"/>
</dbReference>
<dbReference type="GO" id="GO:0015934">
    <property type="term" value="C:large ribosomal subunit"/>
    <property type="evidence" value="ECO:0007669"/>
    <property type="project" value="InterPro"/>
</dbReference>
<dbReference type="GO" id="GO:0019843">
    <property type="term" value="F:rRNA binding"/>
    <property type="evidence" value="ECO:0007669"/>
    <property type="project" value="UniProtKB-UniRule"/>
</dbReference>
<dbReference type="GO" id="GO:0003735">
    <property type="term" value="F:structural constituent of ribosome"/>
    <property type="evidence" value="ECO:0007669"/>
    <property type="project" value="InterPro"/>
</dbReference>
<dbReference type="GO" id="GO:0000049">
    <property type="term" value="F:tRNA binding"/>
    <property type="evidence" value="ECO:0007669"/>
    <property type="project" value="UniProtKB-KW"/>
</dbReference>
<dbReference type="GO" id="GO:0006417">
    <property type="term" value="P:regulation of translation"/>
    <property type="evidence" value="ECO:0007669"/>
    <property type="project" value="UniProtKB-KW"/>
</dbReference>
<dbReference type="GO" id="GO:0006412">
    <property type="term" value="P:translation"/>
    <property type="evidence" value="ECO:0007669"/>
    <property type="project" value="UniProtKB-UniRule"/>
</dbReference>
<dbReference type="CDD" id="cd00403">
    <property type="entry name" value="Ribosomal_L1"/>
    <property type="match status" value="1"/>
</dbReference>
<dbReference type="FunFam" id="3.40.50.790:FF:000001">
    <property type="entry name" value="50S ribosomal protein L1"/>
    <property type="match status" value="1"/>
</dbReference>
<dbReference type="Gene3D" id="3.30.190.20">
    <property type="match status" value="1"/>
</dbReference>
<dbReference type="Gene3D" id="3.40.50.790">
    <property type="match status" value="1"/>
</dbReference>
<dbReference type="HAMAP" id="MF_01318_B">
    <property type="entry name" value="Ribosomal_uL1_B"/>
    <property type="match status" value="1"/>
</dbReference>
<dbReference type="InterPro" id="IPR005878">
    <property type="entry name" value="Ribosom_uL1_bac-type"/>
</dbReference>
<dbReference type="InterPro" id="IPR002143">
    <property type="entry name" value="Ribosomal_uL1"/>
</dbReference>
<dbReference type="InterPro" id="IPR023674">
    <property type="entry name" value="Ribosomal_uL1-like"/>
</dbReference>
<dbReference type="InterPro" id="IPR028364">
    <property type="entry name" value="Ribosomal_uL1/biogenesis"/>
</dbReference>
<dbReference type="InterPro" id="IPR016095">
    <property type="entry name" value="Ribosomal_uL1_3-a/b-sand"/>
</dbReference>
<dbReference type="InterPro" id="IPR023673">
    <property type="entry name" value="Ribosomal_uL1_CS"/>
</dbReference>
<dbReference type="NCBIfam" id="TIGR01169">
    <property type="entry name" value="rplA_bact"/>
    <property type="match status" value="1"/>
</dbReference>
<dbReference type="PANTHER" id="PTHR36427">
    <property type="entry name" value="54S RIBOSOMAL PROTEIN L1, MITOCHONDRIAL"/>
    <property type="match status" value="1"/>
</dbReference>
<dbReference type="PANTHER" id="PTHR36427:SF3">
    <property type="entry name" value="LARGE RIBOSOMAL SUBUNIT PROTEIN UL1M"/>
    <property type="match status" value="1"/>
</dbReference>
<dbReference type="Pfam" id="PF00687">
    <property type="entry name" value="Ribosomal_L1"/>
    <property type="match status" value="1"/>
</dbReference>
<dbReference type="PIRSF" id="PIRSF002155">
    <property type="entry name" value="Ribosomal_L1"/>
    <property type="match status" value="1"/>
</dbReference>
<dbReference type="SUPFAM" id="SSF56808">
    <property type="entry name" value="Ribosomal protein L1"/>
    <property type="match status" value="1"/>
</dbReference>
<dbReference type="PROSITE" id="PS01199">
    <property type="entry name" value="RIBOSOMAL_L1"/>
    <property type="match status" value="1"/>
</dbReference>
<evidence type="ECO:0000255" key="1">
    <source>
        <dbReference type="HAMAP-Rule" id="MF_01318"/>
    </source>
</evidence>
<evidence type="ECO:0000305" key="2"/>
<protein>
    <recommendedName>
        <fullName evidence="1">Large ribosomal subunit protein uL1</fullName>
    </recommendedName>
    <alternativeName>
        <fullName evidence="2">50S ribosomal protein L1</fullName>
    </alternativeName>
</protein>
<proteinExistence type="inferred from homology"/>
<sequence>MAGKNYRAAAAQVDRNMEYDLVDAVAKVKEITNVKFDATVDVAVKLGVDPRHADQVVRGTVMLPHGTGKTVSVLVVCKEAKAAEATEAGADLVGFEEYIEKIQNGWTGVDVIIATPDVMGQLGKVAKILGPRGLMPNPKSGTVTMDVAKAVKEVKAGKIEFRVDKAGNVHAPVGKASFPADQLVTNITSFLKEVMRLKPSAAKGQYVQGIAVSSTMSPGVRIKREKFVA</sequence>
<gene>
    <name evidence="1" type="primary">rplA</name>
    <name type="ordered locus">Plut_1965</name>
</gene>
<feature type="chain" id="PRO_0000230622" description="Large ribosomal subunit protein uL1">
    <location>
        <begin position="1"/>
        <end position="229"/>
    </location>
</feature>
<name>RL1_CHLL3</name>